<protein>
    <recommendedName>
        <fullName>Serine/threonine-protein kinase</fullName>
        <ecNumber>2.7.11.1</ecNumber>
    </recommendedName>
</protein>
<dbReference type="EC" id="2.7.11.1"/>
<dbReference type="EMBL" id="D00676">
    <property type="protein sequence ID" value="BAA00581.1"/>
    <property type="molecule type" value="Genomic_DNA"/>
</dbReference>
<dbReference type="PIR" id="A36655">
    <property type="entry name" value="TVBEPS"/>
</dbReference>
<dbReference type="SMR" id="P17613"/>
<dbReference type="GO" id="GO:0000307">
    <property type="term" value="C:cyclin-dependent protein kinase holoenzyme complex"/>
    <property type="evidence" value="ECO:0007669"/>
    <property type="project" value="TreeGrafter"/>
</dbReference>
<dbReference type="GO" id="GO:0005524">
    <property type="term" value="F:ATP binding"/>
    <property type="evidence" value="ECO:0007669"/>
    <property type="project" value="UniProtKB-KW"/>
</dbReference>
<dbReference type="GO" id="GO:0030332">
    <property type="term" value="F:cyclin binding"/>
    <property type="evidence" value="ECO:0007669"/>
    <property type="project" value="TreeGrafter"/>
</dbReference>
<dbReference type="GO" id="GO:0004693">
    <property type="term" value="F:cyclin-dependent protein serine/threonine kinase activity"/>
    <property type="evidence" value="ECO:0007669"/>
    <property type="project" value="TreeGrafter"/>
</dbReference>
<dbReference type="GO" id="GO:0106310">
    <property type="term" value="F:protein serine kinase activity"/>
    <property type="evidence" value="ECO:0007669"/>
    <property type="project" value="RHEA"/>
</dbReference>
<dbReference type="GO" id="GO:0010389">
    <property type="term" value="P:regulation of G2/M transition of mitotic cell cycle"/>
    <property type="evidence" value="ECO:0007669"/>
    <property type="project" value="TreeGrafter"/>
</dbReference>
<dbReference type="GO" id="GO:0010468">
    <property type="term" value="P:regulation of gene expression"/>
    <property type="evidence" value="ECO:0007669"/>
    <property type="project" value="TreeGrafter"/>
</dbReference>
<dbReference type="GO" id="GO:0007165">
    <property type="term" value="P:signal transduction"/>
    <property type="evidence" value="ECO:0007669"/>
    <property type="project" value="TreeGrafter"/>
</dbReference>
<dbReference type="CDD" id="cd00180">
    <property type="entry name" value="PKc"/>
    <property type="match status" value="1"/>
</dbReference>
<dbReference type="Gene3D" id="1.10.510.10">
    <property type="entry name" value="Transferase(Phosphotransferase) domain 1"/>
    <property type="match status" value="1"/>
</dbReference>
<dbReference type="InterPro" id="IPR050108">
    <property type="entry name" value="CDK"/>
</dbReference>
<dbReference type="InterPro" id="IPR011009">
    <property type="entry name" value="Kinase-like_dom_sf"/>
</dbReference>
<dbReference type="InterPro" id="IPR000719">
    <property type="entry name" value="Prot_kinase_dom"/>
</dbReference>
<dbReference type="InterPro" id="IPR008271">
    <property type="entry name" value="Ser/Thr_kinase_AS"/>
</dbReference>
<dbReference type="PANTHER" id="PTHR24056">
    <property type="entry name" value="CELL DIVISION PROTEIN KINASE"/>
    <property type="match status" value="1"/>
</dbReference>
<dbReference type="PANTHER" id="PTHR24056:SF537">
    <property type="entry name" value="KINASE, PUTATIVE-RELATED"/>
    <property type="match status" value="1"/>
</dbReference>
<dbReference type="Pfam" id="PF00069">
    <property type="entry name" value="Pkinase"/>
    <property type="match status" value="1"/>
</dbReference>
<dbReference type="SMART" id="SM00220">
    <property type="entry name" value="S_TKc"/>
    <property type="match status" value="1"/>
</dbReference>
<dbReference type="SUPFAM" id="SSF56112">
    <property type="entry name" value="Protein kinase-like (PK-like)"/>
    <property type="match status" value="1"/>
</dbReference>
<dbReference type="PROSITE" id="PS50011">
    <property type="entry name" value="PROTEIN_KINASE_DOM"/>
    <property type="match status" value="1"/>
</dbReference>
<dbReference type="PROSITE" id="PS00108">
    <property type="entry name" value="PROTEIN_KINASE_ST"/>
    <property type="match status" value="1"/>
</dbReference>
<comment type="function">
    <text>Able to phosphorylate in vitro the major virion phosphoprotein phosphorylated in vivo.</text>
</comment>
<comment type="catalytic activity">
    <reaction>
        <text>L-seryl-[protein] + ATP = O-phospho-L-seryl-[protein] + ADP + H(+)</text>
        <dbReference type="Rhea" id="RHEA:17989"/>
        <dbReference type="Rhea" id="RHEA-COMP:9863"/>
        <dbReference type="Rhea" id="RHEA-COMP:11604"/>
        <dbReference type="ChEBI" id="CHEBI:15378"/>
        <dbReference type="ChEBI" id="CHEBI:29999"/>
        <dbReference type="ChEBI" id="CHEBI:30616"/>
        <dbReference type="ChEBI" id="CHEBI:83421"/>
        <dbReference type="ChEBI" id="CHEBI:456216"/>
        <dbReference type="EC" id="2.7.11.1"/>
    </reaction>
</comment>
<comment type="catalytic activity">
    <reaction>
        <text>L-threonyl-[protein] + ATP = O-phospho-L-threonyl-[protein] + ADP + H(+)</text>
        <dbReference type="Rhea" id="RHEA:46608"/>
        <dbReference type="Rhea" id="RHEA-COMP:11060"/>
        <dbReference type="Rhea" id="RHEA-COMP:11605"/>
        <dbReference type="ChEBI" id="CHEBI:15378"/>
        <dbReference type="ChEBI" id="CHEBI:30013"/>
        <dbReference type="ChEBI" id="CHEBI:30616"/>
        <dbReference type="ChEBI" id="CHEBI:61977"/>
        <dbReference type="ChEBI" id="CHEBI:456216"/>
        <dbReference type="EC" id="2.7.11.1"/>
    </reaction>
</comment>
<comment type="similarity">
    <text evidence="1">Belongs to the protein kinase superfamily. Ser/Thr protein kinase family.</text>
</comment>
<feature type="chain" id="PRO_0000086182" description="Serine/threonine-protein kinase">
    <location>
        <begin position="1"/>
        <end position="334"/>
    </location>
</feature>
<feature type="domain" description="Protein kinase" evidence="1">
    <location>
        <begin position="53"/>
        <end position="333"/>
    </location>
</feature>
<feature type="active site" description="Proton acceptor" evidence="1 2">
    <location>
        <position position="167"/>
    </location>
</feature>
<feature type="binding site" evidence="1">
    <location>
        <begin position="59"/>
        <end position="67"/>
    </location>
    <ligand>
        <name>ATP</name>
        <dbReference type="ChEBI" id="CHEBI:30616"/>
    </ligand>
</feature>
<feature type="binding site" evidence="1">
    <location>
        <position position="82"/>
    </location>
    <ligand>
        <name>ATP</name>
        <dbReference type="ChEBI" id="CHEBI:30616"/>
    </ligand>
</feature>
<name>KR1_SUHVK</name>
<gene>
    <name type="primary">PK</name>
</gene>
<reference key="1">
    <citation type="journal article" date="1990" name="J. Gen. Virol.">
        <title>The protein kinase encoded in the short unique region of pseudorabies virus: description of the gene and identification of its product in virions and in infected cells.</title>
        <authorList>
            <person name="Zhang G."/>
            <person name="Stevens R."/>
            <person name="Leader D.P."/>
        </authorList>
    </citation>
    <scope>NUCLEOTIDE SEQUENCE [GENOMIC DNA]</scope>
</reference>
<organismHost>
    <name type="scientific">Sus scrofa</name>
    <name type="common">Pig</name>
    <dbReference type="NCBI Taxonomy" id="9823"/>
</organismHost>
<accession>P17613</accession>
<proteinExistence type="inferred from homology"/>
<organism>
    <name type="scientific">Suid herpesvirus 1 (strain Kaplan)</name>
    <name type="common">SuHV-1</name>
    <name type="synonym">Pseudorabies virus (strain Kaplan)</name>
    <dbReference type="NCBI Taxonomy" id="33703"/>
    <lineage>
        <taxon>Viruses</taxon>
        <taxon>Duplodnaviria</taxon>
        <taxon>Heunggongvirae</taxon>
        <taxon>Peploviricota</taxon>
        <taxon>Herviviricetes</taxon>
        <taxon>Herpesvirales</taxon>
        <taxon>Orthoherpesviridae</taxon>
        <taxon>Alphaherpesvirinae</taxon>
        <taxon>Varicellovirus</taxon>
        <taxon>Varicellovirus suidalpha1</taxon>
        <taxon>Suid herpesvirus 1</taxon>
    </lineage>
</organism>
<keyword id="KW-0067">ATP-binding</keyword>
<keyword id="KW-0418">Kinase</keyword>
<keyword id="KW-0547">Nucleotide-binding</keyword>
<keyword id="KW-0723">Serine/threonine-protein kinase</keyword>
<keyword id="KW-0808">Transferase</keyword>
<evidence type="ECO:0000255" key="1">
    <source>
        <dbReference type="PROSITE-ProRule" id="PRU00159"/>
    </source>
</evidence>
<evidence type="ECO:0000255" key="2">
    <source>
        <dbReference type="PROSITE-ProRule" id="PRU10027"/>
    </source>
</evidence>
<sequence>MADAGIPDEILYSDISDDEIIIDGDGDSSGDEDDDDGGLTRQAAARIVTDLGFEVLQPLQSGSEGRVFVARRPGEADTVVLKVGQKPSTLMEGMLLQRLSHDNVMRMKQMLARGPATCLVLPHFRCDLYSYLTMRDGPLDMRDAGCVIRAVLRGLAYLHGMRIMHRDVKAENIFLEDVDTVCLGDLGAARCNVAAPNFYGLAGTIETNAPEVLARDRYDTKVDVWGAGVVLFETLAYPKTITGGDEPAINGEMHLIDLIRALGVHPEEFPPDTRLRSEFVRYAGTHRQPYTQYARVARLGLPETGAFLIYKMLTFDPVRRPSADEILNFGMWTV</sequence>